<comment type="function">
    <text evidence="1">Multifunctional regulator of fatty acid metabolism.</text>
</comment>
<comment type="subunit">
    <text evidence="1">Homodimer.</text>
</comment>
<comment type="subcellular location">
    <subcellularLocation>
        <location evidence="1">Cytoplasm</location>
    </subcellularLocation>
</comment>
<evidence type="ECO:0000255" key="1">
    <source>
        <dbReference type="HAMAP-Rule" id="MF_00696"/>
    </source>
</evidence>
<keyword id="KW-0010">Activator</keyword>
<keyword id="KW-0963">Cytoplasm</keyword>
<keyword id="KW-0238">DNA-binding</keyword>
<keyword id="KW-0276">Fatty acid metabolism</keyword>
<keyword id="KW-0443">Lipid metabolism</keyword>
<keyword id="KW-0678">Repressor</keyword>
<keyword id="KW-0804">Transcription</keyword>
<keyword id="KW-0805">Transcription regulation</keyword>
<dbReference type="EMBL" id="CP000469">
    <property type="protein sequence ID" value="ABK47868.1"/>
    <property type="molecule type" value="Genomic_DNA"/>
</dbReference>
<dbReference type="RefSeq" id="WP_011716671.1">
    <property type="nucleotide sequence ID" value="NC_008577.1"/>
</dbReference>
<dbReference type="SMR" id="A0KVP9"/>
<dbReference type="STRING" id="94122.Shewana3_1635"/>
<dbReference type="KEGG" id="shn:Shewana3_1635"/>
<dbReference type="eggNOG" id="COG2186">
    <property type="taxonomic scope" value="Bacteria"/>
</dbReference>
<dbReference type="HOGENOM" id="CLU_017584_9_4_6"/>
<dbReference type="OrthoDB" id="5683977at2"/>
<dbReference type="Proteomes" id="UP000002589">
    <property type="component" value="Chromosome"/>
</dbReference>
<dbReference type="GO" id="GO:0005737">
    <property type="term" value="C:cytoplasm"/>
    <property type="evidence" value="ECO:0007669"/>
    <property type="project" value="UniProtKB-SubCell"/>
</dbReference>
<dbReference type="GO" id="GO:0003677">
    <property type="term" value="F:DNA binding"/>
    <property type="evidence" value="ECO:0007669"/>
    <property type="project" value="UniProtKB-KW"/>
</dbReference>
<dbReference type="GO" id="GO:0003700">
    <property type="term" value="F:DNA-binding transcription factor activity"/>
    <property type="evidence" value="ECO:0007669"/>
    <property type="project" value="UniProtKB-UniRule"/>
</dbReference>
<dbReference type="GO" id="GO:0000062">
    <property type="term" value="F:fatty-acyl-CoA binding"/>
    <property type="evidence" value="ECO:0007669"/>
    <property type="project" value="InterPro"/>
</dbReference>
<dbReference type="GO" id="GO:0006631">
    <property type="term" value="P:fatty acid metabolic process"/>
    <property type="evidence" value="ECO:0007669"/>
    <property type="project" value="UniProtKB-KW"/>
</dbReference>
<dbReference type="GO" id="GO:0019217">
    <property type="term" value="P:regulation of fatty acid metabolic process"/>
    <property type="evidence" value="ECO:0007669"/>
    <property type="project" value="UniProtKB-UniRule"/>
</dbReference>
<dbReference type="CDD" id="cd07377">
    <property type="entry name" value="WHTH_GntR"/>
    <property type="match status" value="1"/>
</dbReference>
<dbReference type="Gene3D" id="1.20.120.530">
    <property type="entry name" value="GntR ligand-binding domain-like"/>
    <property type="match status" value="1"/>
</dbReference>
<dbReference type="Gene3D" id="1.10.10.10">
    <property type="entry name" value="Winged helix-like DNA-binding domain superfamily/Winged helix DNA-binding domain"/>
    <property type="match status" value="1"/>
</dbReference>
<dbReference type="HAMAP" id="MF_00696">
    <property type="entry name" value="HTH_FadR"/>
    <property type="match status" value="1"/>
</dbReference>
<dbReference type="InterPro" id="IPR014178">
    <property type="entry name" value="FA-response_TF_FadR"/>
</dbReference>
<dbReference type="InterPro" id="IPR028374">
    <property type="entry name" value="FadR_C"/>
</dbReference>
<dbReference type="InterPro" id="IPR008920">
    <property type="entry name" value="TF_FadR/GntR_C"/>
</dbReference>
<dbReference type="InterPro" id="IPR000524">
    <property type="entry name" value="Tscrpt_reg_HTH_GntR"/>
</dbReference>
<dbReference type="InterPro" id="IPR036388">
    <property type="entry name" value="WH-like_DNA-bd_sf"/>
</dbReference>
<dbReference type="InterPro" id="IPR036390">
    <property type="entry name" value="WH_DNA-bd_sf"/>
</dbReference>
<dbReference type="NCBIfam" id="TIGR02812">
    <property type="entry name" value="fadR_gamma"/>
    <property type="match status" value="1"/>
</dbReference>
<dbReference type="NCBIfam" id="NF003444">
    <property type="entry name" value="PRK04984.1"/>
    <property type="match status" value="1"/>
</dbReference>
<dbReference type="PANTHER" id="PTHR43537:SF52">
    <property type="entry name" value="FATTY ACID METABOLISM REGULATOR PROTEIN"/>
    <property type="match status" value="1"/>
</dbReference>
<dbReference type="PANTHER" id="PTHR43537">
    <property type="entry name" value="TRANSCRIPTIONAL REGULATOR, GNTR FAMILY"/>
    <property type="match status" value="1"/>
</dbReference>
<dbReference type="Pfam" id="PF07840">
    <property type="entry name" value="FadR_C"/>
    <property type="match status" value="1"/>
</dbReference>
<dbReference type="Pfam" id="PF00392">
    <property type="entry name" value="GntR"/>
    <property type="match status" value="1"/>
</dbReference>
<dbReference type="PRINTS" id="PR00035">
    <property type="entry name" value="HTHGNTR"/>
</dbReference>
<dbReference type="SMART" id="SM00345">
    <property type="entry name" value="HTH_GNTR"/>
    <property type="match status" value="1"/>
</dbReference>
<dbReference type="SUPFAM" id="SSF48008">
    <property type="entry name" value="GntR ligand-binding domain-like"/>
    <property type="match status" value="1"/>
</dbReference>
<dbReference type="SUPFAM" id="SSF46785">
    <property type="entry name" value="Winged helix' DNA-binding domain"/>
    <property type="match status" value="1"/>
</dbReference>
<dbReference type="PROSITE" id="PS50949">
    <property type="entry name" value="HTH_GNTR"/>
    <property type="match status" value="1"/>
</dbReference>
<protein>
    <recommendedName>
        <fullName evidence="1">Fatty acid metabolism regulator protein</fullName>
    </recommendedName>
</protein>
<proteinExistence type="inferred from homology"/>
<organism>
    <name type="scientific">Shewanella sp. (strain ANA-3)</name>
    <dbReference type="NCBI Taxonomy" id="94122"/>
    <lineage>
        <taxon>Bacteria</taxon>
        <taxon>Pseudomonadati</taxon>
        <taxon>Pseudomonadota</taxon>
        <taxon>Gammaproteobacteria</taxon>
        <taxon>Alteromonadales</taxon>
        <taxon>Shewanellaceae</taxon>
        <taxon>Shewanella</taxon>
    </lineage>
</organism>
<gene>
    <name evidence="1" type="primary">fadR</name>
    <name type="ordered locus">Shewana3_1635</name>
</gene>
<name>FADR_SHESA</name>
<feature type="chain" id="PRO_0000301511" description="Fatty acid metabolism regulator protein">
    <location>
        <begin position="1"/>
        <end position="241"/>
    </location>
</feature>
<feature type="domain" description="HTH gntR-type" evidence="1">
    <location>
        <begin position="6"/>
        <end position="74"/>
    </location>
</feature>
<feature type="DNA-binding region" description="H-T-H motif" evidence="1">
    <location>
        <begin position="34"/>
        <end position="53"/>
    </location>
</feature>
<reference key="1">
    <citation type="submission" date="2006-09" db="EMBL/GenBank/DDBJ databases">
        <title>Complete sequence of chromosome 1 of Shewanella sp. ANA-3.</title>
        <authorList>
            <person name="Copeland A."/>
            <person name="Lucas S."/>
            <person name="Lapidus A."/>
            <person name="Barry K."/>
            <person name="Detter J.C."/>
            <person name="Glavina del Rio T."/>
            <person name="Hammon N."/>
            <person name="Israni S."/>
            <person name="Dalin E."/>
            <person name="Tice H."/>
            <person name="Pitluck S."/>
            <person name="Chertkov O."/>
            <person name="Brettin T."/>
            <person name="Bruce D."/>
            <person name="Han C."/>
            <person name="Tapia R."/>
            <person name="Gilna P."/>
            <person name="Schmutz J."/>
            <person name="Larimer F."/>
            <person name="Land M."/>
            <person name="Hauser L."/>
            <person name="Kyrpides N."/>
            <person name="Kim E."/>
            <person name="Newman D."/>
            <person name="Salticov C."/>
            <person name="Konstantinidis K."/>
            <person name="Klappenback J."/>
            <person name="Tiedje J."/>
            <person name="Richardson P."/>
        </authorList>
    </citation>
    <scope>NUCLEOTIDE SEQUENCE [LARGE SCALE GENOMIC DNA]</scope>
    <source>
        <strain>ANA-3</strain>
    </source>
</reference>
<accession>A0KVP9</accession>
<sequence>MIINAKGPASFAEKYIVRSIWENKFPPGSILPAERELSELIGVTRTTLREVLQRLARDGWLKIQHGKPTRVNNFWETSGLNILETIADLNPEGFPVLVDQLLSARTNVSAIYFRGALRNSPDTAVEVLGQIHQLEDTAESFAEYDYLLHHTLAFSSGNPLYVLILNGFKGLYSRVGRYYFSSPEARQLALNFYKELEILAKAKNYIDVPALMRTYGINSGKMWLQLRDDMPSSIAQQDGNA</sequence>